<reference key="1">
    <citation type="journal article" date="1994" name="Cell">
        <title>A novel family of putative signal transducers associated with the cytoplasmic domain of the 75 kDa tumor necrosis factor receptor.</title>
        <authorList>
            <person name="Rothe M."/>
            <person name="Wong S.C."/>
            <person name="Henzel W.J."/>
            <person name="Goeddel D.V."/>
        </authorList>
    </citation>
    <scope>NUCLEOTIDE SEQUENCE [MRNA] (ISOFORM 1)</scope>
    <scope>INTERACTION WITH TRAF1 AND TNFRSF1B</scope>
</reference>
<reference key="2">
    <citation type="journal article" date="1998" name="J. Biol. Chem.">
        <title>Tumor necrosis factor receptor (TNFR)-associated factor 2A (TRAF2A), a TRAF2 splice variant with an extended RING finger domain that inhibits TNFR2-mediated NF-kappaB activation.</title>
        <authorList>
            <person name="Brink R."/>
            <person name="Lodish H.F."/>
        </authorList>
    </citation>
    <scope>NUCLEOTIDE SEQUENCE [MRNA] (ISOFORM 2)</scope>
    <source>
        <strain>C57BL/6J</strain>
        <tissue>Kidney</tissue>
    </source>
</reference>
<reference key="3">
    <citation type="journal article" date="2000" name="Mol. Immunol.">
        <title>Complete structural characterisation of the mammalian and Drosophila TRAF genes: implications for TRAF evolution and the role of RING finger splice variants.</title>
        <authorList>
            <person name="Grech A."/>
            <person name="Quinn R."/>
            <person name="Srinivasan D."/>
            <person name="Badoux X."/>
            <person name="Brink R."/>
        </authorList>
    </citation>
    <scope>NUCLEOTIDE SEQUENCE (ISOFORM 1)</scope>
    <source>
        <strain>C57BL/6J</strain>
    </source>
</reference>
<reference key="4">
    <citation type="journal article" date="2009" name="PLoS Biol.">
        <title>Lineage-specific biology revealed by a finished genome assembly of the mouse.</title>
        <authorList>
            <person name="Church D.M."/>
            <person name="Goodstadt L."/>
            <person name="Hillier L.W."/>
            <person name="Zody M.C."/>
            <person name="Goldstein S."/>
            <person name="She X."/>
            <person name="Bult C.J."/>
            <person name="Agarwala R."/>
            <person name="Cherry J.L."/>
            <person name="DiCuccio M."/>
            <person name="Hlavina W."/>
            <person name="Kapustin Y."/>
            <person name="Meric P."/>
            <person name="Maglott D."/>
            <person name="Birtle Z."/>
            <person name="Marques A.C."/>
            <person name="Graves T."/>
            <person name="Zhou S."/>
            <person name="Teague B."/>
            <person name="Potamousis K."/>
            <person name="Churas C."/>
            <person name="Place M."/>
            <person name="Herschleb J."/>
            <person name="Runnheim R."/>
            <person name="Forrest D."/>
            <person name="Amos-Landgraf J."/>
            <person name="Schwartz D.C."/>
            <person name="Cheng Z."/>
            <person name="Lindblad-Toh K."/>
            <person name="Eichler E.E."/>
            <person name="Ponting C.P."/>
        </authorList>
    </citation>
    <scope>NUCLEOTIDE SEQUENCE [LARGE SCALE GENOMIC DNA]</scope>
    <source>
        <strain>C57BL/6J</strain>
    </source>
</reference>
<reference key="5">
    <citation type="journal article" date="2004" name="Genome Res.">
        <title>The status, quality, and expansion of the NIH full-length cDNA project: the Mammalian Gene Collection (MGC).</title>
        <authorList>
            <consortium name="The MGC Project Team"/>
        </authorList>
    </citation>
    <scope>NUCLEOTIDE SEQUENCE [LARGE SCALE MRNA] (ISOFORM 1)</scope>
    <source>
        <strain>Czech II</strain>
        <tissue>Mammary tumor</tissue>
    </source>
</reference>
<reference key="6">
    <citation type="submission" date="2009-01" db="UniProtKB">
        <authorList>
            <person name="Lubec G."/>
            <person name="Sunyer B."/>
            <person name="Chen W.-Q."/>
        </authorList>
    </citation>
    <scope>PROTEIN SEQUENCE OF 430-440</scope>
    <scope>IDENTIFICATION BY MASS SPECTROMETRY</scope>
    <source>
        <strain>OF1</strain>
        <tissue>Hippocampus</tissue>
    </source>
</reference>
<reference key="7">
    <citation type="journal article" date="1996" name="Cell">
        <title>TRADD-TRAF2 and TRADD-FADD interactions define two distinct TNF receptor 1 signal transduction pathways.</title>
        <authorList>
            <person name="Hsu H."/>
            <person name="Shu H.-B."/>
            <person name="Pan M.G."/>
            <person name="Goeddel D.V."/>
        </authorList>
    </citation>
    <scope>INTERACTION WITH TRADD</scope>
</reference>
<reference key="8">
    <citation type="journal article" date="1996" name="Proc. Natl. Acad. Sci. U.S.A.">
        <title>The tumor necrosis factor-inducible zinc finger protein A20 interacts with TRAF1/TRAF2 and inhibits NF-kappaB activation.</title>
        <authorList>
            <person name="Song H.Y."/>
            <person name="Rothe M."/>
            <person name="Goeddel D.V."/>
        </authorList>
    </citation>
    <scope>INTERACTION WITH TNFAIP3</scope>
</reference>
<reference key="9">
    <citation type="journal article" date="1997" name="Immunity">
        <title>Early lethality, functional NF-kappaB activation, and increased sensitivity to TNF-induced cell death in TRAF2-deficient mice.</title>
        <authorList>
            <person name="Yeh W.C."/>
            <person name="Shahinian A."/>
            <person name="Speiser D."/>
            <person name="Kraunus J."/>
            <person name="Billia F."/>
            <person name="Wakeham A."/>
            <person name="de la Pompa J.L."/>
            <person name="Ferrick D."/>
            <person name="Hum B."/>
            <person name="Iscove N."/>
            <person name="Ohashi P."/>
            <person name="Rothe M."/>
            <person name="Goeddel D.V."/>
            <person name="Mak T.W."/>
        </authorList>
    </citation>
    <scope>DISRUPTION PHENOTYPE</scope>
    <scope>FUNCTION</scope>
</reference>
<reference key="10">
    <citation type="journal article" date="1998" name="Nat. Genet.">
        <title>Peg3/Pw1 is an imprinted gene involved in the TNF-NFkappaB signal transduction pathway.</title>
        <authorList>
            <person name="Relaix F."/>
            <person name="Wei X.-J."/>
            <person name="Wu X."/>
            <person name="Sassoon D.A."/>
        </authorList>
    </citation>
    <scope>INTERACTION WITH PEG3</scope>
</reference>
<reference key="11">
    <citation type="journal article" date="1997" name="J. Exp. Med.">
        <title>TRAF-interacting protein (TRIP): a novel component of the tumor necrosis factor receptor (TNFR)- and CD30-TRAF signaling complexes that inhibits TRAF2-mediated NF-kappaB activation.</title>
        <authorList>
            <person name="Lee S.Y."/>
            <person name="Lee S.Y."/>
            <person name="Choi Y."/>
        </authorList>
    </citation>
    <scope>IDENTIFICATION IN A COMPLEX WITH TNFRSF8; TNFRSF1B</scope>
    <scope>TRAF1 AND TRAIP</scope>
    <scope>INTERACTION WITH TRAIP</scope>
</reference>
<reference key="12">
    <citation type="journal article" date="1999" name="Immunity">
        <title>TRAF2 deficiency results in hyperactivity of certain TNFR1 signals and impairment of CD40-mediated responses.</title>
        <authorList>
            <person name="Nguyen L.T."/>
            <person name="Duncan G.S."/>
            <person name="Mirtsos C."/>
            <person name="Ng M."/>
            <person name="Speiser D.E."/>
            <person name="Shahinian A."/>
            <person name="Marino M.W."/>
            <person name="Mak T.W."/>
            <person name="Ohashi P.S."/>
            <person name="Yeh W.C."/>
        </authorList>
    </citation>
    <scope>DISRUPTION PHENOTYPE</scope>
    <scope>FUNCTION</scope>
</reference>
<reference key="13">
    <citation type="journal article" date="2001" name="J. Biol. Chem.">
        <title>FLASH coordinates NF-kappa B activity via TRAF2.</title>
        <authorList>
            <person name="Choi Y.-H."/>
            <person name="Kim K.-B."/>
            <person name="Kim H.-H."/>
            <person name="Hong G.-S."/>
            <person name="Kwon Y.-K."/>
            <person name="Chung C.-W."/>
            <person name="Park Y.-M."/>
            <person name="Shen Z.-J."/>
            <person name="Kim B.J."/>
            <person name="Lee S.-Y."/>
            <person name="Jung Y.-K."/>
        </authorList>
    </citation>
    <scope>INTERACTION WITH CASP8AP2</scope>
</reference>
<reference key="14">
    <citation type="journal article" date="2001" name="J. Exp. Med.">
        <title>Tumor necrosis factor receptor-associated factor (TRAF)2 represses the T helper cell type 2 response through interaction with NFAT-interacting protein (NIP45).</title>
        <authorList>
            <person name="Lieberson R."/>
            <person name="Mowen K.A."/>
            <person name="McBride K.D."/>
            <person name="Leautaud V."/>
            <person name="Zhang X."/>
            <person name="Suh W.-K."/>
            <person name="Wu L."/>
            <person name="Glimcher L.H."/>
        </authorList>
    </citation>
    <scope>INTERACTION WITH NFATC2IP</scope>
</reference>
<reference key="15">
    <citation type="journal article" date="2002" name="J. Biol. Chem.">
        <title>Regulation of TRAF2 signaling by self-induced degradation.</title>
        <authorList>
            <person name="Brown K.D."/>
            <person name="Hostager B.S."/>
            <person name="Bishop G.A."/>
        </authorList>
    </citation>
    <scope>AUTOUBIQUITINATION</scope>
    <scope>DEGRADATION</scope>
    <scope>INTERACTION WITH CD40</scope>
    <scope>MUTAGENESIS OF CYS-34</scope>
</reference>
<reference key="16">
    <citation type="journal article" date="2002" name="Mol. Cell">
        <title>A mammalian homolog of Drosophila schnurri, KRC, regulates TNF receptor-driven responses and interacts with TRAF2.</title>
        <authorList>
            <person name="Oukka M."/>
            <person name="Kim S.T."/>
            <person name="Lugo G."/>
            <person name="Sun J."/>
            <person name="Wu L.-C."/>
            <person name="Glimcher L.H."/>
        </authorList>
    </citation>
    <scope>INTERACTION WITH HIVEP3</scope>
</reference>
<reference key="17">
    <citation type="journal article" date="2004" name="J. Biol. Chem.">
        <title>The kinase activity of Rip1 is not required for tumor necrosis factor-alpha-induced IkappaB kinase or p38 MAP kinase activation or for the ubiquitination of Rip1 by Traf2.</title>
        <authorList>
            <person name="Lee T.H."/>
            <person name="Shank J."/>
            <person name="Cusson N."/>
            <person name="Kelliher M.A."/>
        </authorList>
    </citation>
    <scope>FUNCTION</scope>
</reference>
<reference key="18">
    <citation type="journal article" date="2004" name="Mol. Cell. Biol.">
        <title>TRAF family proteins link PKR with NF-kappa B activation.</title>
        <authorList>
            <person name="Gil J."/>
            <person name="Garcia M.A."/>
            <person name="Gomez-Puertas P."/>
            <person name="Guerra S."/>
            <person name="Rullas J."/>
            <person name="Nakano H."/>
            <person name="Alcami J."/>
            <person name="Esteban M."/>
        </authorList>
    </citation>
    <scope>FUNCTION</scope>
</reference>
<reference key="19">
    <citation type="journal article" date="2006" name="FEBS Lett.">
        <title>TRUSS, a tumor necrosis factor receptor-1-interacting protein, activates c-Jun NH(2)-terminal kinase and transcription factor AP-1.</title>
        <authorList>
            <person name="Soond S.M."/>
            <person name="Terry J.L."/>
            <person name="Riches D.W.H."/>
        </authorList>
    </citation>
    <scope>INTERACTION WITH TRPC4AP</scope>
</reference>
<reference key="20">
    <citation type="journal article" date="2008" name="J. Biol. Chem.">
        <title>AIP1 is critical in transducing IRE1-mediated endoplasmic reticulum stress response.</title>
        <authorList>
            <person name="Luo D."/>
            <person name="He Y."/>
            <person name="Zhang H."/>
            <person name="Yu L."/>
            <person name="Chen H."/>
            <person name="Xu Z."/>
            <person name="Tang S."/>
            <person name="Urano F."/>
            <person name="Min W."/>
        </authorList>
    </citation>
    <scope>INTERACTION WITH DAB2IP AND ERN1</scope>
</reference>
<reference key="21">
    <citation type="journal article" date="2008" name="J. Biol. Chem.">
        <title>FLN29 deficiency reveals its negative regulatory role in the Toll-like receptor (TLR) and retinoic acid-inducible gene I (RIG-I)-like helicase signaling pathway.</title>
        <authorList>
            <person name="Sanada T."/>
            <person name="Takaesu G."/>
            <person name="Mashima R."/>
            <person name="Yoshida R."/>
            <person name="Kobayashi T."/>
            <person name="Yoshimura A."/>
        </authorList>
    </citation>
    <scope>INTERACTION WITH TRAFD1</scope>
</reference>
<reference key="22">
    <citation type="journal article" date="2008" name="Nat. Immunol.">
        <title>Nonredundant and complementary functions of TRAF2 and TRAF3 in a ubiquitination cascade that activates NIK-dependent alternative NF-kappaB signaling.</title>
        <authorList>
            <person name="Vallabhapurapu S."/>
            <person name="Matsuzawa A."/>
            <person name="Zhang W."/>
            <person name="Tseng P.H."/>
            <person name="Keats J.J."/>
            <person name="Wang H."/>
            <person name="Vignali D.A."/>
            <person name="Bergsagel P.L."/>
            <person name="Karin M."/>
        </authorList>
    </citation>
    <scope>FUNCTION</scope>
    <scope>DISRUPTION PHENOTYPE</scope>
    <scope>IDENTIFICATION IN A COMPLEX WITH MAP3K14; BIRC3 AND TRAF3</scope>
</reference>
<reference key="23">
    <citation type="journal article" date="2008" name="Nat. Immunol.">
        <title>Noncanonical NF-kappaB activation requires coordinated assembly of a regulatory complex of the adaptors cIAP1, cIAP2, TRAF2 and TRAF3 and the kinase NIK.</title>
        <authorList>
            <person name="Zarnegar B.J."/>
            <person name="Wang Y."/>
            <person name="Mahoney D.J."/>
            <person name="Dempsey P.W."/>
            <person name="Cheung H.H."/>
            <person name="He J."/>
            <person name="Shiba T."/>
            <person name="Yang X."/>
            <person name="Yeh W.C."/>
            <person name="Mak T.W."/>
            <person name="Korneluk R.G."/>
            <person name="Cheng G."/>
        </authorList>
    </citation>
    <scope>FUNCTION</scope>
    <scope>IDENTIFICATION IN A COMPLEX WITH TRAF3; BIRC2 AND BIRC3</scope>
</reference>
<reference key="24">
    <citation type="journal article" date="2009" name="Mol. Cell">
        <title>PKC phosphorylation of TRAF2 mediates IKKalpha/beta recruitment and K63-linked polyubiquitination.</title>
        <authorList>
            <person name="Li S."/>
            <person name="Wang L."/>
            <person name="Dorf M.E."/>
        </authorList>
    </citation>
    <scope>FUNCTION</scope>
    <scope>IDENTIFICATION IN COMPLEX I; INTERACTION WITH TAK1; IKKA; IKKB; TAB2 AND TAB3</scope>
    <scope>PHOSPHORYLATION AT THR-117</scope>
</reference>
<reference key="25">
    <citation type="journal article" date="2009" name="J. Biol. Chem.">
        <title>Enhanced cytoprotective effects of the inhibitor of apoptosis protein cellular IAP1 through stabilization with TRAF2.</title>
        <authorList>
            <person name="Csomos R.A."/>
            <person name="Brady G.F."/>
            <person name="Duckett C.S."/>
        </authorList>
    </citation>
    <scope>INTERACTION WITH BIRC2</scope>
</reference>
<reference key="26">
    <citation type="journal article" date="2009" name="J. Biol. Chem.">
        <title>TRAF2 must bind to cellular inhibitors of apoptosis for tumor necrosis factor (TNF) to efficiently activate NF-{kappa}B and to prevent TNF-induced apoptosis.</title>
        <authorList>
            <person name="Vince J.E."/>
            <person name="Pantaki D."/>
            <person name="Feltham R."/>
            <person name="Mace P.D."/>
            <person name="Cordier S.M."/>
            <person name="Schmukle A.C."/>
            <person name="Davidson A.J."/>
            <person name="Callus B.A."/>
            <person name="Wong W.W."/>
            <person name="Gentle I.E."/>
            <person name="Carter H."/>
            <person name="Lee E.F."/>
            <person name="Walczak H."/>
            <person name="Day C.L."/>
            <person name="Vaux D.L."/>
            <person name="Silke J."/>
        </authorList>
    </citation>
    <scope>FUNCTION</scope>
    <scope>IDENTIFICATION IN COMPLEX I</scope>
    <scope>DOMAIN</scope>
    <scope>MUTAGENESIS OF GLU-283; GLU-292 AND GLU-294</scope>
</reference>
<reference key="27">
    <citation type="journal article" date="2009" name="J. Mol. Biol.">
        <title>TRAF2 suppresses basal IKK activity in resting cells and TNFalpha can activate IKK in TRAF2 and TRAF5 double knockout cells.</title>
        <authorList>
            <person name="Zhang L."/>
            <person name="Blackwell K."/>
            <person name="Thomas G.S."/>
            <person name="Sun S."/>
            <person name="Yeh W.C."/>
            <person name="Habelhah H."/>
        </authorList>
    </citation>
    <scope>DISRUPTION PHENOTYPE</scope>
    <scope>FUNCTION</scope>
</reference>
<reference key="28">
    <citation type="journal article" date="2010" name="Science">
        <title>Inhibition of NF-kappaB signaling by A20 through disruption of ubiquitin enzyme complexes.</title>
        <authorList>
            <person name="Shembade N."/>
            <person name="Ma A."/>
            <person name="Harhaj E.W."/>
        </authorList>
    </citation>
    <scope>INTERACTION WITH TNFAIP3 AND TAX1BP1</scope>
</reference>
<reference key="29">
    <citation type="journal article" date="2011" name="Mol. Biol. Cell">
        <title>UXT-V1 protects cells against TNF-induced apoptosis through modulating complex II formation.</title>
        <authorList>
            <person name="Huang Y."/>
            <person name="Chen L."/>
            <person name="Zhou Y."/>
            <person name="Liu H."/>
            <person name="Yang J."/>
            <person name="Liu Z."/>
            <person name="Wang C."/>
        </authorList>
    </citation>
    <scope>INTERACTION WITH UXT</scope>
</reference>
<reference key="30">
    <citation type="journal article" date="2012" name="Mol. Cell">
        <title>A protective strategy against hyperinflammatory responses requiring the nontranscriptional actions of GPS2.</title>
        <authorList>
            <person name="Cardamone M.D."/>
            <person name="Krones A."/>
            <person name="Tanasa B."/>
            <person name="Taylor H."/>
            <person name="Ricci L."/>
            <person name="Ohgi K.A."/>
            <person name="Glass C.K."/>
            <person name="Rosenfeld M.G."/>
            <person name="Perissi V."/>
        </authorList>
    </citation>
    <scope>INTERACTION WITH GPS2</scope>
</reference>
<reference key="31">
    <citation type="journal article" date="2013" name="Nat. Immunol.">
        <title>A combinatorial F box protein directed pathway controls TRAF adaptor stability to regulate inflammation.</title>
        <authorList>
            <person name="Chen B.B."/>
            <person name="Coon T.A."/>
            <person name="Glasser J.R."/>
            <person name="McVerry B.J."/>
            <person name="Zhao J."/>
            <person name="Zhao Y."/>
            <person name="Zou C."/>
            <person name="Ellis B."/>
            <person name="Sciurba F.C."/>
            <person name="Zhang Y."/>
            <person name="Mallampalli R.K."/>
        </authorList>
    </citation>
    <scope>UBIQUITINATION AT LYS-320</scope>
    <scope>MUTAGENESIS OF LYS-320 AND TRP-356</scope>
</reference>
<reference key="32">
    <citation type="journal article" date="2014" name="Nat. Commun.">
        <title>LRRC19 expressed in the kidney induces TRAF2/6-mediated signals to prevent infection by uropathogenic bacteria.</title>
        <authorList>
            <person name="Su X."/>
            <person name="Min S."/>
            <person name="Cao S."/>
            <person name="Yan H."/>
            <person name="Zhao Y."/>
            <person name="Li H."/>
            <person name="Chai L."/>
            <person name="Mei S."/>
            <person name="Yang J."/>
            <person name="Zhang Y."/>
            <person name="Zhang Z."/>
            <person name="Liu F."/>
            <person name="Sun W."/>
            <person name="Che Y."/>
            <person name="Yang R."/>
        </authorList>
    </citation>
    <scope>UBIQUITINATION</scope>
</reference>
<reference key="33">
    <citation type="journal article" date="2017" name="Nature">
        <title>TRAF2 and OTUD7B govern a ubiquitin-dependent switch that regulates mTORC2 signalling.</title>
        <authorList>
            <person name="Wang B."/>
            <person name="Jie Z."/>
            <person name="Joo D."/>
            <person name="Ordureau A."/>
            <person name="Liu P."/>
            <person name="Gan W."/>
            <person name="Guo J."/>
            <person name="Zhang J."/>
            <person name="North B.J."/>
            <person name="Dai X."/>
            <person name="Cheng X."/>
            <person name="Bian X."/>
            <person name="Zhang L."/>
            <person name="Harper J.W."/>
            <person name="Sun S.C."/>
            <person name="Wei W."/>
        </authorList>
    </citation>
    <scope>FUNCTION</scope>
    <scope>PATHWAY</scope>
</reference>
<comment type="function">
    <text evidence="2 6 11 12 16 17 18 19 21 27 32">E3 ubiquitin-protein ligase that regulates activation of NF-kappa-B and JNK and plays a central role in the regulation of cell survival and apoptosis (PubMed:15121867, PubMed:18997792, PubMed:19150425, PubMed:19409903, PubMed:19815541, PubMed:9390694). Catalyzes 'Lys-63'-linked ubiquitination of target proteins, such as BIRC3, IKBKE, MLST8, RIPK1 and TICAM1 (PubMed:15175328, PubMed:28489822). Is an essential constituent of several E3 ubiquitin-protein ligase complexes, where it promotes the ubiquitination of target proteins by bringing them into contact with other E3 ubiquitin ligases (By similarity). Regulates BIRC2 and BIRC3 protein levels by inhibiting their autoubiquitination and subsequent degradation; this does not depend on the TRAF2 RING-type zinc finger domain (PubMed:18997794). Plays a role in mediating activation of NF-kappa-B by EIF2AK2/PKR (By similarity). In complex with BIRC2 or BIRC3, promotes ubiquitination of IKBKE (By similarity). Acts as a regulator of mTORC1 and mTORC2 assembly by mediating 'Lys-63'-linked ubiquitination of MLST8, thereby inhibiting formation of the mTORC2 complex, while facilitating assembly of the mTORC1 complex (PubMed:28489822). Required for normal antibody isotype switching from IgM to IgG (PubMed:10514016).</text>
</comment>
<comment type="catalytic activity">
    <reaction evidence="2">
        <text>S-ubiquitinyl-[E2 ubiquitin-conjugating enzyme]-L-cysteine + [acceptor protein]-L-lysine = [E2 ubiquitin-conjugating enzyme]-L-cysteine + N(6)-ubiquitinyl-[acceptor protein]-L-lysine.</text>
        <dbReference type="EC" id="2.3.2.27"/>
    </reaction>
</comment>
<comment type="activity regulation">
    <text evidence="2">Has very low E3 ubiquitin ligase activity in the absence of sphingosine-1-phosphate. E3 ubiquitin ligase activity is strongly activated by cytoplasmic sphingosine-1-phosphate.</text>
</comment>
<comment type="pathway">
    <text evidence="27">Protein modification; protein ubiquitination.</text>
</comment>
<comment type="subunit">
    <text evidence="2 7 8 9 10 13 14 15 16 17 18 20 21 22 23 24 28 29 30 31 33">Homotrimer (By similarity). Heterotrimer with TRAF1 (PubMed:8069916). Heterotrimer with TRAF3 (via TRAF domain) (By similarity). The domain containing the RING-type and the first TRAF-type zinc finger can also form homodimers (in vitro) (By similarity). Interacts with TNFRSF1B/TNFR2 (PubMed:8069916). Interacts with TNFRSF5/CD40 (PubMed:11909853). Interacts with TNFRSF4, TNFRSF7/CD27, TNFRSF8/CD30, TNFRSF9/CD137, TNFRSF11A/RANK, TNFRSF13B/TACI, TNFRSF14, TNFRSF16/NGFR, TNFRSF17/BCMA, TNFRSF18/AITR, TNFRSF19/TROY, TNFRSF19L/RELT and EDAR (By similarity). Stimulation of TNF-alpha receptor TNFRSF1A leads to the formation of two distinct signaling complexes. Plasma membrane-bound complex I is composed of TNFRSF1A, TRADD, RIPK1, TRAF2 and BIRC2/c-IAP1 or BIRC3 which interacts with CHUCK/IKK-alpha, IKBKB/IKK-beta and IKBKG/IKK-gamma promoting cell survival (PubMed:19150425, PubMed:19815541). Subsequently, TRADD, RIPK1 and TRAF2 dissociate from TNFRSF1A and form cytoplasmic complex II with FADD and caspase CASP8 promoting cell apoptosis (By similarity). Interacts with TRADD (PubMed:8565075). Identified in a complex with TNFRSF1A, RIPK1 and IKBKB/IKK-beta (By similarity). Interacts with RIPK2 (By similarity). Interacts with BIRC2 and BIRC3 N-terminus; a single BIRC2 or BIRC3 molecule interacts with a heterotrimer formed by TRAF1 and TRAF2, or a TRAF2 homotrimer (By similarity). Identified in a complex composed of TRAF2, TRAF3, BIRC2 and BIRC3 (PubMed:18997794). Interacts with BIRC2; the interaction promotes BIRC2 stability (PubMed:19506082). Interaction with BIRC2 and/or BIRC3 is essential for ubiquitination of IKBKE, degradation of NFKBIA and activation of NF-kappa-B (PubMed:19815541). Within complex I, phosphorylated TRAF2 interacts (via 'Lys-63'-linked polyubiquitin chains) with CHUCK/IKK-alpha, IKBKB/IKK-beta, IKBKG/IKK-gamma TAB2, TAB3 and TAK1 in response to TNF-alpha stimulation (PubMed:19150425). Within complex I, interacts with UXT isoform 1 (via TPQE motif); the interaction prevents the recruitment of FADD and CASP8/caspase 8 to complex I (PubMed:21307340). Forms a complex composed of TNFRSF8/CD30 or TNFRSF1B/TNFR2, and TRAF1, TRAF2 and E3 ligase TRAIP (PubMed:9104814). Within the complex, interacts with TRAIP; the interaction inhibits TRAF2-mediated NF-kappa B activation (PubMed:9104814). Component of a complex composed of TANK and TBK1 (By similarity). Interacts with TRPC4AP (PubMed:16876162). Interacts with MAP3K1/MEKK1, MAP3K5/ASK1 and MAP3K11/MLK3 in response to TNF-alpha stimulation; the interaction leads to JNK activation and interaction with MAP3K5 is inhibited by PRMT1 (By similarity). Component of a complex composed of MAP3K14/NIK BIRC3 and TRAF3; the interaction leads to BIRC2/3-mediated ubiquitination of TRAF3 upon CD40 engagement in a TRAF2-dependent manner (PubMed:18997792). Interacts with MAP3K14/NIK in response to TNF-alpha stimulation; the interaction leads to NF-kappa B activation (By similarity). Interacts with PEG3; the interaction may promote TRAF2-mediated NF-kappa B activation (PubMed:9500555). Interacts with HIVEP3; the interaction may inhibit TNF-alpha-TRAF2-mediated NF-kappa B and JNK activation (PubMed:11804591). Interacts with TANK/ITRAF; the interaction prevents interaction between TNFRSF1B/TNFR2 and TRAF2 (By similarity). Interacts with deubiquitinating enzyme CYLD; the interaction results in the deubiquitination and inactivation of TRAF2 (By similarity). Interacts with SIAH2; the interaction leads to TRAF2 ubiquitination and degradation (By similarity). Interacts with E2 conjugating enzyme UBE2N/Ubc13, E3 ligase ITCH and RNF11 in response to TNF-alpha stimulation (By similarity). Interacts with ubiquitin-editing enzyme TNFAIP3/A20 in response to TNF-alpha stimulation; the interaction promotes TRAF2 dissociation from UBE2N/Ubc13, ITCH, RNF11 and TAX1BP1 and prevents prolonged TRAF-2 ubiquitination (PubMed:20185725, PubMed:8692885). Interacts with TAX1BP1 in response to TNF-alpha stimulation; the interaction promotes TRAF2 dissociation from UBE2N/Ubc13 and TNFAIP3/A20, and prevents prolonged TRAF-2 ubiquitination (PubMed:20185725). Interacts (via C-terminus) with EIF2AK2/PKR (via the kinase catalytic domain) (By similarity). Interacts with deubiquitinating enzyme USP48 (By similarity). Interacts with PTPN2; probably involved in TNF-mediated signaling (By similarity). Interacts with Toll-like receptor TLR4/3 adapter TICAM1/TRIF; the interaction may promote TICAM1 ubiquitination (By similarity). Interacts with kinase/endoribonuclease ERN1/IRE1 and DAB2IP in response to ER stress; the interaction requires DAB2IP (PubMed:18281285). Interacts with ERN1/IRE1 and TAOK3 in response to ER stress; the interaction may promote TRAF2 phosphorylation (By similarity). Interacts (via zinc fingers) with DAB2IP (via C-terminus PER domain) in response to TNF-alpha stimulation (By similarity). Interacts with CASP8AP2/FLASH (PubMed:11340079). Interacts with NFATC2IP; the interaction may repress IL-4 production in T cells (PubMed:11435475). Interacts with kinase CDK9. Interacts with sphingosine kinase 1 SPHK1 (By similarity). Interacts with kinase TNIK (By similarity). Interacts with TRAFD1 (PubMed:18849341). Interacts with DNA phosphodiesterase TDP2 (By similarity). Interacts with MAVS/IPS1. Interacts with CARD14 (By similarity). Interacts with GPS2 (PubMed:22424771). Interacts with XPNPEP3 (By similarity). Interacts with RIPK3 (By similarity). Interacts with RELL2 (By similarity). Interacts with LRRC19 (By similarity). Interacts with GAPDH; promoting TRAF2 ubiquitination (By similarity).</text>
</comment>
<comment type="interaction">
    <interactant intactId="EBI-520016">
        <id>P39429</id>
    </interactant>
    <interactant intactId="EBI-642236">
        <id>O08863</id>
        <label>Birc3</label>
    </interactant>
    <organismsDiffer>false</organismsDiffer>
    <experiments>7</experiments>
</comment>
<comment type="interaction">
    <interactant intactId="EBI-520016">
        <id>P39429</id>
    </interactant>
    <interactant intactId="EBI-525742">
        <id>P27512</id>
        <label>Cd40</label>
    </interactant>
    <organismsDiffer>false</organismsDiffer>
    <experiments>3</experiments>
</comment>
<comment type="interaction">
    <interactant intactId="EBI-520016">
        <id>P39429</id>
    </interactant>
    <interactant intactId="EBI-646587">
        <id>Q920A9</id>
        <label>Fcrla</label>
    </interactant>
    <organismsDiffer>false</organismsDiffer>
    <experiments>5</experiments>
</comment>
<comment type="interaction">
    <interactant intactId="EBI-520016">
        <id>P39429</id>
    </interactant>
    <interactant intactId="EBI-448533">
        <id>Q62406</id>
        <label>Irak1</label>
    </interactant>
    <organismsDiffer>false</organismsDiffer>
    <experiments>2</experiments>
</comment>
<comment type="interaction">
    <interactant intactId="EBI-520016">
        <id>P39429</id>
    </interactant>
    <interactant intactId="EBI-647023">
        <id>P50284</id>
        <label>Ltbr</label>
    </interactant>
    <organismsDiffer>false</organismsDiffer>
    <experiments>3</experiments>
</comment>
<comment type="interaction">
    <interactant intactId="EBI-520016">
        <id>P39429</id>
    </interactant>
    <interactant intactId="EBI-1775345">
        <id>Q62073</id>
        <label>Map3k7</label>
    </interactant>
    <organismsDiffer>false</organismsDiffer>
    <experiments>2</experiments>
</comment>
<comment type="interaction">
    <interactant intactId="EBI-520016">
        <id>P39429</id>
    </interactant>
    <interactant intactId="EBI-646209">
        <id>Q8CDB0</id>
        <label>Mknk2</label>
    </interactant>
    <organismsDiffer>false</organismsDiffer>
    <experiments>3</experiments>
</comment>
<comment type="interaction">
    <interactant intactId="EBI-520016">
        <id>P39429</id>
    </interactant>
    <interactant intactId="EBI-646125">
        <id>P70347-1</id>
        <label>Tank</label>
    </interactant>
    <organismsDiffer>false</organismsDiffer>
    <experiments>7</experiments>
</comment>
<comment type="interaction">
    <interactant intactId="EBI-520016">
        <id>P39429</id>
    </interactant>
    <interactant intactId="EBI-646595">
        <id>Q60769</id>
        <label>Tnfaip3</label>
    </interactant>
    <organismsDiffer>false</organismsDiffer>
    <experiments>3</experiments>
</comment>
<comment type="interaction">
    <interactant intactId="EBI-520016">
        <id>P39429</id>
    </interactant>
    <interactant intactId="EBI-647362">
        <id>O35305</id>
        <label>Tnfrsf11a</label>
    </interactant>
    <organismsDiffer>false</organismsDiffer>
    <experiments>2</experiments>
</comment>
<comment type="interaction">
    <interactant intactId="EBI-520016">
        <id>P39429</id>
    </interactant>
    <interactant intactId="EBI-520001">
        <id>P47741</id>
        <label>Tnfrsf4</label>
    </interactant>
    <organismsDiffer>false</organismsDiffer>
    <experiments>12</experiments>
</comment>
<comment type="interaction">
    <interactant intactId="EBI-520016">
        <id>P39429</id>
    </interactant>
    <interactant intactId="EBI-520135">
        <id>Q60803</id>
        <label>Traf3</label>
    </interactant>
    <organismsDiffer>false</organismsDiffer>
    <experiments>2</experiments>
</comment>
<comment type="interaction">
    <interactant intactId="EBI-520016">
        <id>P39429</id>
    </interactant>
    <interactant intactId="EBI-8753518">
        <id>PRO_0000037576</id>
        <dbReference type="UniProtKB" id="P27958"/>
    </interactant>
    <organismsDiffer>true</organismsDiffer>
    <experiments>5</experiments>
</comment>
<comment type="subcellular location">
    <subcellularLocation>
        <location>Cytoplasm</location>
    </subcellularLocation>
</comment>
<comment type="alternative products">
    <event type="alternative splicing"/>
    <isoform>
        <id>P39429-1</id>
        <name>1</name>
        <sequence type="displayed"/>
    </isoform>
    <isoform>
        <id>P39429-2</id>
        <name>2</name>
        <name>TRAF2A</name>
        <sequence type="described" ref="VSP_007402"/>
    </isoform>
</comment>
<comment type="tissue specificity">
    <text>Isoform 1 and isoform 2 are expressed in spleen, adipose tissues, skeletal muscles, thymus, testis, heart, lung, brain. Isoform 2 is very weakly expressed in heart, lung and brain.</text>
</comment>
<comment type="domain">
    <text evidence="21">The coiled coil domain mediates homo- and hetero-oligomerization.</text>
</comment>
<comment type="domain">
    <text evidence="21">The MATH/TRAF domain binds to receptor cytoplasmic domains.</text>
</comment>
<comment type="domain">
    <text evidence="2">The RING-type zinc finger domain is essential for E3 ubiquitin-protein ligase activity. It is not essential for the stabilization of BIRC2, or for the ubiquitination of RIPK1 in response to TNFR1 signaling.</text>
</comment>
<comment type="PTM">
    <text evidence="2">Phosphorylated at several serine residues within the first 128 amino acid residues. Phosphorylated at Thr-117 in response to signaling via TNF and TNFRSF1A. Phosphorylation at Thr-117 is required for 'Lys-63'-linked polyubiquitination, but not for 'Lys-48'-linked polyubiquitination. Phosphorylation at Thr-117 is important for interaction with IKKA and IKKB, activation of IKK and subsequent activation of NF-kappa-B.</text>
</comment>
<comment type="PTM">
    <text evidence="2 25 26">Undergoes both 'Lys-48'-linked and 'Lys-63'-linked polyubiquitination. Polyubiquitinated via 'Lys-63'-linked ubiquitin in response to TNF signaling; this requires prior phosphorylation at Thr-117. 'Lys-63'-linked polyubiquitination promotes TRAF2-mediated activation of NF-kappa-B. Can be polyubiquitinated at several Lys residues via 'Lys-48'-linked ubiquitin chains in response to TNF signaling, leading to proteasomal degradation. Autoubiquitinated, leading to its subsequent proteasomal degradation. Polyubiquitinated by BIRC2 and SIAH2, leading to its subsequent proteasomal degradation. Not ubiquitinated by BIRC3 or SIAH1. Deubiquitinated by CYLD, a protease that specifically cleaves 'Lys-63'-linked polyubiquitin chains. Ubiquination is inhibited by LRRC19; inhiits proteasomal degradation (PubMed:25026888). Ubiquitinated at Lys-320 by the SCF(FBXL2) complex, leading to its degradation by the proteasome (PubMed:23542741). Ubiquitinated by E3 ubiquitin-protein ligase complex containing FBXO7; leading to repression of NF-kappa-B signaling (By similarity).</text>
</comment>
<comment type="disruption phenotype">
    <text evidence="6 16 19 32">Important embryonic and perinatal mortality. Life-born mutants appear normal at birth, but are smaller than their littermates after three days, fail to thrive, and few survive more than three weeks. Thymus and spleen are severely atrophic, and mice display lymphopenia of both T and B lymphocytes, with normal erythrocyte counts. Their thymocytes are abnormally sensitive to TNF-induced cell death and exhibit high levels of spontaneous apoptosis. Macrophages are highly sensitive to TNF and produce high levels of nitric oxide (NO) in response to TNF. Likewise, endogenous TNF production is abnormally increased upon exposure to TNF. Symptoms are much attenuated in mice that are deficient for both Traf2 and Tnfrsf1a/Tnfr1, or Traf2 and Tnf. Likewise, deletion of one Map3k14 allele alleviates symptoms and rescues splenic atrophy and reduction of splenocyte numbers. Mice show normal IgM production in response to viral infection, but lack CD40-mediated proliferation of B-cells. They are deficient in antibody isotype switching and fail to produce IgG.</text>
</comment>
<comment type="miscellaneous">
    <molecule>Isoform 2</molecule>
    <text evidence="35">On mRNA level, has a significantly shorter half-life than isoform 1.</text>
</comment>
<comment type="similarity">
    <text evidence="35">Belongs to the TNF receptor-associated factor family. A subfamily.</text>
</comment>
<keyword id="KW-0007">Acetylation</keyword>
<keyword id="KW-0025">Alternative splicing</keyword>
<keyword id="KW-0053">Apoptosis</keyword>
<keyword id="KW-0175">Coiled coil</keyword>
<keyword id="KW-0963">Cytoplasm</keyword>
<keyword id="KW-0903">Direct protein sequencing</keyword>
<keyword id="KW-1017">Isopeptide bond</keyword>
<keyword id="KW-0446">Lipid-binding</keyword>
<keyword id="KW-0479">Metal-binding</keyword>
<keyword id="KW-0597">Phosphoprotein</keyword>
<keyword id="KW-1185">Reference proteome</keyword>
<keyword id="KW-0677">Repeat</keyword>
<keyword id="KW-0808">Transferase</keyword>
<keyword id="KW-0832">Ubl conjugation</keyword>
<keyword id="KW-0833">Ubl conjugation pathway</keyword>
<keyword id="KW-0862">Zinc</keyword>
<keyword id="KW-0863">Zinc-finger</keyword>
<name>TRAF2_MOUSE</name>
<sequence length="501" mass="56026">MAAASVTSPGSLELLQPGFSKTLLGTRLEAKYLCSACKNILRRPFQAQCGHRYCSFCLTSILSSGPQNCAACVYEGLYEEGISILESSSAFPDNAARREVESLPAVCPNDGCTWKGTLKEYESCHEGLCPFLLTECPACKGLVRLSEKEHHTEQECPKRSLSCQHCRAPCSHVDLEVHYEVCPKFPLTCDGCGKKKIPRETFQDHVRACSKCRVLCRFHTVGCSEMVETENLQDHELQRLREHLALLLSSFLEAQASPGTLNQVGPELLQRCQILEQKIATFENIVCVLNREVERVAVTAEACSRQHRLDQDKIEALSNKVQQLERSIGLKDLAMADLEQKVSELEVSTYDGVFIWKISDFTRKRQEAVAGRTPAIFSPAFYTSRYGYKMCLRVYLNGDGTGRGTHLSLFFVVMKGPNDALLQWPFNQKVTLMLLDHNNREHVIDAFRPDVTSSSFQRPVSDMNIASGCPLFCPVSKMEAKNSYVRDDAIFIKAIVDLTGL</sequence>
<gene>
    <name type="primary">Traf2</name>
</gene>
<dbReference type="EC" id="2.3.2.27"/>
<dbReference type="EMBL" id="L35303">
    <property type="protein sequence ID" value="AAC37662.1"/>
    <property type="molecule type" value="mRNA"/>
</dbReference>
<dbReference type="EMBL" id="AF027570">
    <property type="protein sequence ID" value="AAC53545.1"/>
    <property type="molecule type" value="mRNA"/>
</dbReference>
<dbReference type="EMBL" id="AF233332">
    <property type="protein sequence ID" value="AAF59928.1"/>
    <property type="molecule type" value="Genomic_DNA"/>
</dbReference>
<dbReference type="EMBL" id="AF233326">
    <property type="protein sequence ID" value="AAF59928.1"/>
    <property type="status" value="JOINED"/>
    <property type="molecule type" value="Genomic_DNA"/>
</dbReference>
<dbReference type="EMBL" id="AF233327">
    <property type="protein sequence ID" value="AAF59928.1"/>
    <property type="status" value="JOINED"/>
    <property type="molecule type" value="Genomic_DNA"/>
</dbReference>
<dbReference type="EMBL" id="AF233328">
    <property type="protein sequence ID" value="AAF59928.1"/>
    <property type="status" value="JOINED"/>
    <property type="molecule type" value="Genomic_DNA"/>
</dbReference>
<dbReference type="EMBL" id="AF233329">
    <property type="protein sequence ID" value="AAF59928.1"/>
    <property type="status" value="JOINED"/>
    <property type="molecule type" value="Genomic_DNA"/>
</dbReference>
<dbReference type="EMBL" id="AF233330">
    <property type="protein sequence ID" value="AAF59928.1"/>
    <property type="status" value="JOINED"/>
    <property type="molecule type" value="Genomic_DNA"/>
</dbReference>
<dbReference type="EMBL" id="AF233331">
    <property type="protein sequence ID" value="AAF59928.1"/>
    <property type="status" value="JOINED"/>
    <property type="molecule type" value="Genomic_DNA"/>
</dbReference>
<dbReference type="EMBL" id="AL732590">
    <property type="status" value="NOT_ANNOTATED_CDS"/>
    <property type="molecule type" value="Genomic_DNA"/>
</dbReference>
<dbReference type="EMBL" id="BC003801">
    <property type="protein sequence ID" value="AAH03801.1"/>
    <property type="molecule type" value="mRNA"/>
</dbReference>
<dbReference type="CCDS" id="CCDS15779.1">
    <molecule id="P39429-1"/>
</dbReference>
<dbReference type="CCDS" id="CCDS71002.1">
    <molecule id="P39429-2"/>
</dbReference>
<dbReference type="PIR" id="I61512">
    <property type="entry name" value="I61512"/>
</dbReference>
<dbReference type="RefSeq" id="NP_001277342.1">
    <molecule id="P39429-2"/>
    <property type="nucleotide sequence ID" value="NM_001290413.1"/>
</dbReference>
<dbReference type="RefSeq" id="NP_033448.2">
    <molecule id="P39429-1"/>
    <property type="nucleotide sequence ID" value="NM_009422.3"/>
</dbReference>
<dbReference type="SMR" id="P39429"/>
<dbReference type="BioGRID" id="204303">
    <property type="interactions" value="33"/>
</dbReference>
<dbReference type="CORUM" id="P39429"/>
<dbReference type="DIP" id="DIP-468N"/>
<dbReference type="FunCoup" id="P39429">
    <property type="interactions" value="1206"/>
</dbReference>
<dbReference type="IntAct" id="P39429">
    <property type="interactions" value="49"/>
</dbReference>
<dbReference type="MINT" id="P39429"/>
<dbReference type="STRING" id="10090.ENSMUSP00000109872"/>
<dbReference type="iPTMnet" id="P39429"/>
<dbReference type="PhosphoSitePlus" id="P39429"/>
<dbReference type="SwissPalm" id="P39429"/>
<dbReference type="PaxDb" id="10090-ENSMUSP00000028311"/>
<dbReference type="PeptideAtlas" id="P39429"/>
<dbReference type="ProteomicsDB" id="260736">
    <molecule id="P39429-1"/>
</dbReference>
<dbReference type="ProteomicsDB" id="260737">
    <molecule id="P39429-2"/>
</dbReference>
<dbReference type="Pumba" id="P39429"/>
<dbReference type="Antibodypedia" id="2422">
    <property type="antibodies" value="761 antibodies from 48 providers"/>
</dbReference>
<dbReference type="DNASU" id="22030"/>
<dbReference type="Ensembl" id="ENSMUST00000028311.13">
    <molecule id="P39429-1"/>
    <property type="protein sequence ID" value="ENSMUSP00000028311.7"/>
    <property type="gene ID" value="ENSMUSG00000026942.14"/>
</dbReference>
<dbReference type="Ensembl" id="ENSMUST00000114234.2">
    <molecule id="P39429-2"/>
    <property type="protein sequence ID" value="ENSMUSP00000109872.2"/>
    <property type="gene ID" value="ENSMUSG00000026942.14"/>
</dbReference>
<dbReference type="GeneID" id="22030"/>
<dbReference type="KEGG" id="mmu:22030"/>
<dbReference type="UCSC" id="uc008isl.2">
    <molecule id="P39429-2"/>
    <property type="organism name" value="mouse"/>
</dbReference>
<dbReference type="UCSC" id="uc008ism.2">
    <molecule id="P39429-1"/>
    <property type="organism name" value="mouse"/>
</dbReference>
<dbReference type="AGR" id="MGI:101835"/>
<dbReference type="CTD" id="7186"/>
<dbReference type="MGI" id="MGI:101835">
    <property type="gene designation" value="Traf2"/>
</dbReference>
<dbReference type="VEuPathDB" id="HostDB:ENSMUSG00000026942"/>
<dbReference type="eggNOG" id="KOG0297">
    <property type="taxonomic scope" value="Eukaryota"/>
</dbReference>
<dbReference type="GeneTree" id="ENSGT00940000156621"/>
<dbReference type="HOGENOM" id="CLU_021061_4_1_1"/>
<dbReference type="InParanoid" id="P39429"/>
<dbReference type="OMA" id="INESCSW"/>
<dbReference type="OrthoDB" id="9707at9989"/>
<dbReference type="PhylomeDB" id="P39429"/>
<dbReference type="TreeFam" id="TF321154"/>
<dbReference type="Reactome" id="R-MMU-3371378">
    <property type="pathway name" value="Regulation by c-FLIP"/>
</dbReference>
<dbReference type="Reactome" id="R-MMU-5218900">
    <property type="pathway name" value="CASP8 activity is inhibited"/>
</dbReference>
<dbReference type="Reactome" id="R-MMU-5357786">
    <property type="pathway name" value="TNFR1-induced proapoptotic signaling"/>
</dbReference>
<dbReference type="Reactome" id="R-MMU-5357905">
    <property type="pathway name" value="Regulation of TNFR1 signaling"/>
</dbReference>
<dbReference type="Reactome" id="R-MMU-5357956">
    <property type="pathway name" value="TNFR1-induced NF-kappa-B signaling pathway"/>
</dbReference>
<dbReference type="Reactome" id="R-MMU-5668541">
    <property type="pathway name" value="TNFR2 non-canonical NF-kB pathway"/>
</dbReference>
<dbReference type="Reactome" id="R-MMU-5675482">
    <property type="pathway name" value="Regulation of necroptotic cell death"/>
</dbReference>
<dbReference type="Reactome" id="R-MMU-5676594">
    <property type="pathway name" value="TNF receptor superfamily (TNFSF) members mediating non-canonical NF-kB pathway"/>
</dbReference>
<dbReference type="Reactome" id="R-MMU-5689880">
    <property type="pathway name" value="Ub-specific processing proteases"/>
</dbReference>
<dbReference type="Reactome" id="R-MMU-69416">
    <property type="pathway name" value="Dimerization of procaspase-8"/>
</dbReference>
<dbReference type="Reactome" id="R-MMU-75893">
    <property type="pathway name" value="TNF signaling"/>
</dbReference>
<dbReference type="Reactome" id="R-MMU-9758274">
    <property type="pathway name" value="Regulation of NF-kappa B signaling"/>
</dbReference>
<dbReference type="UniPathway" id="UPA00143"/>
<dbReference type="BioGRID-ORCS" id="22030">
    <property type="hits" value="33 hits in 84 CRISPR screens"/>
</dbReference>
<dbReference type="ChiTaRS" id="Traf2">
    <property type="organism name" value="mouse"/>
</dbReference>
<dbReference type="PRO" id="PR:P39429"/>
<dbReference type="Proteomes" id="UP000000589">
    <property type="component" value="Chromosome 2"/>
</dbReference>
<dbReference type="RNAct" id="P39429">
    <property type="molecule type" value="protein"/>
</dbReference>
<dbReference type="Bgee" id="ENSMUSG00000026942">
    <property type="expression patterns" value="Expressed in thymus and 210 other cell types or tissues"/>
</dbReference>
<dbReference type="ExpressionAtlas" id="P39429">
    <property type="expression patterns" value="baseline and differential"/>
</dbReference>
<dbReference type="GO" id="GO:0035631">
    <property type="term" value="C:CD40 receptor complex"/>
    <property type="evidence" value="ECO:0000314"/>
    <property type="project" value="BHF-UCL"/>
</dbReference>
<dbReference type="GO" id="GO:0005938">
    <property type="term" value="C:cell cortex"/>
    <property type="evidence" value="ECO:0007669"/>
    <property type="project" value="Ensembl"/>
</dbReference>
<dbReference type="GO" id="GO:0005737">
    <property type="term" value="C:cytoplasm"/>
    <property type="evidence" value="ECO:0000314"/>
    <property type="project" value="AgBase"/>
</dbReference>
<dbReference type="GO" id="GO:0009898">
    <property type="term" value="C:cytoplasmic side of plasma membrane"/>
    <property type="evidence" value="ECO:0000314"/>
    <property type="project" value="BHF-UCL"/>
</dbReference>
<dbReference type="GO" id="GO:0005829">
    <property type="term" value="C:cytosol"/>
    <property type="evidence" value="ECO:0000314"/>
    <property type="project" value="MGI"/>
</dbReference>
<dbReference type="GO" id="GO:1990604">
    <property type="term" value="C:IRE1-TRAF2-ASK1 complex"/>
    <property type="evidence" value="ECO:0000314"/>
    <property type="project" value="ParkinsonsUK-UCL"/>
</dbReference>
<dbReference type="GO" id="GO:0045121">
    <property type="term" value="C:membrane raft"/>
    <property type="evidence" value="ECO:0000314"/>
    <property type="project" value="MGI"/>
</dbReference>
<dbReference type="GO" id="GO:0097057">
    <property type="term" value="C:TRAF2-GSTP1 complex"/>
    <property type="evidence" value="ECO:0007669"/>
    <property type="project" value="Ensembl"/>
</dbReference>
<dbReference type="GO" id="GO:0002947">
    <property type="term" value="C:tumor necrosis factor receptor superfamily complex"/>
    <property type="evidence" value="ECO:0007669"/>
    <property type="project" value="Ensembl"/>
</dbReference>
<dbReference type="GO" id="GO:0000151">
    <property type="term" value="C:ubiquitin ligase complex"/>
    <property type="evidence" value="ECO:0007669"/>
    <property type="project" value="Ensembl"/>
</dbReference>
<dbReference type="GO" id="GO:0012506">
    <property type="term" value="C:vesicle membrane"/>
    <property type="evidence" value="ECO:0000314"/>
    <property type="project" value="MGI"/>
</dbReference>
<dbReference type="GO" id="GO:0005174">
    <property type="term" value="F:CD40 receptor binding"/>
    <property type="evidence" value="ECO:0000353"/>
    <property type="project" value="BHF-UCL"/>
</dbReference>
<dbReference type="GO" id="GO:0042802">
    <property type="term" value="F:identical protein binding"/>
    <property type="evidence" value="ECO:0007669"/>
    <property type="project" value="Ensembl"/>
</dbReference>
<dbReference type="GO" id="GO:0031435">
    <property type="term" value="F:mitogen-activated protein kinase kinase kinase binding"/>
    <property type="evidence" value="ECO:0007669"/>
    <property type="project" value="Ensembl"/>
</dbReference>
<dbReference type="GO" id="GO:0019903">
    <property type="term" value="F:protein phosphatase binding"/>
    <property type="evidence" value="ECO:0007669"/>
    <property type="project" value="Ensembl"/>
</dbReference>
<dbReference type="GO" id="GO:0044877">
    <property type="term" value="F:protein-containing complex binding"/>
    <property type="evidence" value="ECO:0000314"/>
    <property type="project" value="ParkinsonsUK-UCL"/>
</dbReference>
<dbReference type="GO" id="GO:0035591">
    <property type="term" value="F:signaling adaptor activity"/>
    <property type="evidence" value="ECO:0000314"/>
    <property type="project" value="MGI"/>
</dbReference>
<dbReference type="GO" id="GO:0046625">
    <property type="term" value="F:sphingolipid binding"/>
    <property type="evidence" value="ECO:0000250"/>
    <property type="project" value="UniProtKB"/>
</dbReference>
<dbReference type="GO" id="GO:0031996">
    <property type="term" value="F:thioesterase binding"/>
    <property type="evidence" value="ECO:0007669"/>
    <property type="project" value="Ensembl"/>
</dbReference>
<dbReference type="GO" id="GO:0043120">
    <property type="term" value="F:tumor necrosis factor binding"/>
    <property type="evidence" value="ECO:0007669"/>
    <property type="project" value="Ensembl"/>
</dbReference>
<dbReference type="GO" id="GO:0005164">
    <property type="term" value="F:tumor necrosis factor receptor binding"/>
    <property type="evidence" value="ECO:0007669"/>
    <property type="project" value="Ensembl"/>
</dbReference>
<dbReference type="GO" id="GO:0061630">
    <property type="term" value="F:ubiquitin protein ligase activity"/>
    <property type="evidence" value="ECO:0000314"/>
    <property type="project" value="UniProtKB"/>
</dbReference>
<dbReference type="GO" id="GO:0031625">
    <property type="term" value="F:ubiquitin protein ligase binding"/>
    <property type="evidence" value="ECO:0007669"/>
    <property type="project" value="Ensembl"/>
</dbReference>
<dbReference type="GO" id="GO:0004842">
    <property type="term" value="F:ubiquitin-protein transferase activity"/>
    <property type="evidence" value="ECO:0000250"/>
    <property type="project" value="UniProtKB"/>
</dbReference>
<dbReference type="GO" id="GO:0008270">
    <property type="term" value="F:zinc ion binding"/>
    <property type="evidence" value="ECO:0007669"/>
    <property type="project" value="UniProtKB-KW"/>
</dbReference>
<dbReference type="GO" id="GO:0006915">
    <property type="term" value="P:apoptotic process"/>
    <property type="evidence" value="ECO:0007669"/>
    <property type="project" value="UniProtKB-KW"/>
</dbReference>
<dbReference type="GO" id="GO:0160162">
    <property type="term" value="P:CD27 signaling pathway"/>
    <property type="evidence" value="ECO:0007669"/>
    <property type="project" value="Ensembl"/>
</dbReference>
<dbReference type="GO" id="GO:0023035">
    <property type="term" value="P:CD40 signaling pathway"/>
    <property type="evidence" value="ECO:0007669"/>
    <property type="project" value="Ensembl"/>
</dbReference>
<dbReference type="GO" id="GO:0071732">
    <property type="term" value="P:cellular response to nitric oxide"/>
    <property type="evidence" value="ECO:0000315"/>
    <property type="project" value="MGI"/>
</dbReference>
<dbReference type="GO" id="GO:0045087">
    <property type="term" value="P:innate immune response"/>
    <property type="evidence" value="ECO:0007669"/>
    <property type="project" value="Ensembl"/>
</dbReference>
<dbReference type="GO" id="GO:0097400">
    <property type="term" value="P:interleukin-17-mediated signaling pathway"/>
    <property type="evidence" value="ECO:0000314"/>
    <property type="project" value="MGI"/>
</dbReference>
<dbReference type="GO" id="GO:0048255">
    <property type="term" value="P:mRNA stabilization"/>
    <property type="evidence" value="ECO:0000315"/>
    <property type="project" value="MGI"/>
</dbReference>
<dbReference type="GO" id="GO:0043066">
    <property type="term" value="P:negative regulation of apoptotic process"/>
    <property type="evidence" value="ECO:0000303"/>
    <property type="project" value="UniProtKB"/>
</dbReference>
<dbReference type="GO" id="GO:0034351">
    <property type="term" value="P:negative regulation of glial cell apoptotic process"/>
    <property type="evidence" value="ECO:0007669"/>
    <property type="project" value="Ensembl"/>
</dbReference>
<dbReference type="GO" id="GO:0038061">
    <property type="term" value="P:non-canonical NF-kappaB signal transduction"/>
    <property type="evidence" value="ECO:0007669"/>
    <property type="project" value="Ensembl"/>
</dbReference>
<dbReference type="GO" id="GO:0043123">
    <property type="term" value="P:positive regulation of canonical NF-kappaB signal transduction"/>
    <property type="evidence" value="ECO:0000314"/>
    <property type="project" value="AgBase"/>
</dbReference>
<dbReference type="GO" id="GO:2001238">
    <property type="term" value="P:positive regulation of extrinsic apoptotic signaling pathway"/>
    <property type="evidence" value="ECO:0007669"/>
    <property type="project" value="Ensembl"/>
</dbReference>
<dbReference type="GO" id="GO:0032743">
    <property type="term" value="P:positive regulation of interleukin-2 production"/>
    <property type="evidence" value="ECO:0007669"/>
    <property type="project" value="Ensembl"/>
</dbReference>
<dbReference type="GO" id="GO:0043507">
    <property type="term" value="P:positive regulation of JUN kinase activity"/>
    <property type="evidence" value="ECO:0000250"/>
    <property type="project" value="UniProtKB"/>
</dbReference>
<dbReference type="GO" id="GO:0051092">
    <property type="term" value="P:positive regulation of NF-kappaB transcription factor activity"/>
    <property type="evidence" value="ECO:0000315"/>
    <property type="project" value="UniProtKB"/>
</dbReference>
<dbReference type="GO" id="GO:0002726">
    <property type="term" value="P:positive regulation of T cell cytokine production"/>
    <property type="evidence" value="ECO:0007669"/>
    <property type="project" value="Ensembl"/>
</dbReference>
<dbReference type="GO" id="GO:1903265">
    <property type="term" value="P:positive regulation of tumor necrosis factor-mediated signaling pathway"/>
    <property type="evidence" value="ECO:0000314"/>
    <property type="project" value="AgBase"/>
</dbReference>
<dbReference type="GO" id="GO:0097300">
    <property type="term" value="P:programmed necrotic cell death"/>
    <property type="evidence" value="ECO:0000315"/>
    <property type="project" value="MGI"/>
</dbReference>
<dbReference type="GO" id="GO:0051865">
    <property type="term" value="P:protein autoubiquitination"/>
    <property type="evidence" value="ECO:0000250"/>
    <property type="project" value="UniProtKB"/>
</dbReference>
<dbReference type="GO" id="GO:0030163">
    <property type="term" value="P:protein catabolic process"/>
    <property type="evidence" value="ECO:0000315"/>
    <property type="project" value="MGI"/>
</dbReference>
<dbReference type="GO" id="GO:0070534">
    <property type="term" value="P:protein K63-linked ubiquitination"/>
    <property type="evidence" value="ECO:0000314"/>
    <property type="project" value="UniProtKB"/>
</dbReference>
<dbReference type="GO" id="GO:0065003">
    <property type="term" value="P:protein-containing complex assembly"/>
    <property type="evidence" value="ECO:0000314"/>
    <property type="project" value="BHF-UCL"/>
</dbReference>
<dbReference type="GO" id="GO:0042981">
    <property type="term" value="P:regulation of apoptotic process"/>
    <property type="evidence" value="ECO:0000250"/>
    <property type="project" value="UniProtKB"/>
</dbReference>
<dbReference type="GO" id="GO:0002637">
    <property type="term" value="P:regulation of immunoglobulin production"/>
    <property type="evidence" value="ECO:0000315"/>
    <property type="project" value="MGI"/>
</dbReference>
<dbReference type="GO" id="GO:0046328">
    <property type="term" value="P:regulation of JNK cascade"/>
    <property type="evidence" value="ECO:0000314"/>
    <property type="project" value="MGI"/>
</dbReference>
<dbReference type="GO" id="GO:0043254">
    <property type="term" value="P:regulation of protein-containing complex assembly"/>
    <property type="evidence" value="ECO:0007669"/>
    <property type="project" value="Ensembl"/>
</dbReference>
<dbReference type="GO" id="GO:0007165">
    <property type="term" value="P:signal transduction"/>
    <property type="evidence" value="ECO:0000314"/>
    <property type="project" value="MGI"/>
</dbReference>
<dbReference type="GO" id="GO:0023019">
    <property type="term" value="P:signal transduction involved in regulation of gene expression"/>
    <property type="evidence" value="ECO:0000314"/>
    <property type="project" value="MGI"/>
</dbReference>
<dbReference type="GO" id="GO:0042110">
    <property type="term" value="P:T cell activation"/>
    <property type="evidence" value="ECO:0007669"/>
    <property type="project" value="Ensembl"/>
</dbReference>
<dbReference type="GO" id="GO:1905669">
    <property type="term" value="P:TORC1 complex assembly"/>
    <property type="evidence" value="ECO:0000314"/>
    <property type="project" value="UniProtKB"/>
</dbReference>
<dbReference type="GO" id="GO:1905670">
    <property type="term" value="P:TORC2 complex disassembly"/>
    <property type="evidence" value="ECO:0000314"/>
    <property type="project" value="UniProtKB"/>
</dbReference>
<dbReference type="GO" id="GO:0033209">
    <property type="term" value="P:tumor necrosis factor-mediated signaling pathway"/>
    <property type="evidence" value="ECO:0000314"/>
    <property type="project" value="MGI"/>
</dbReference>
<dbReference type="CDD" id="cd03778">
    <property type="entry name" value="MATH_TRAF2"/>
    <property type="match status" value="1"/>
</dbReference>
<dbReference type="CDD" id="cd16639">
    <property type="entry name" value="RING-HC_TRAF2"/>
    <property type="match status" value="1"/>
</dbReference>
<dbReference type="FunFam" id="1.20.5.170:FF:000035">
    <property type="entry name" value="TNF receptor-associated factor"/>
    <property type="match status" value="1"/>
</dbReference>
<dbReference type="FunFam" id="3.30.40.10:FF:000189">
    <property type="entry name" value="TNF receptor-associated factor"/>
    <property type="match status" value="1"/>
</dbReference>
<dbReference type="FunFam" id="3.30.40.10:FF:000291">
    <property type="entry name" value="TNF receptor-associated factor"/>
    <property type="match status" value="1"/>
</dbReference>
<dbReference type="FunFam" id="2.60.210.10:FF:000035">
    <property type="entry name" value="TNF receptor-associated factor 2"/>
    <property type="match status" value="1"/>
</dbReference>
<dbReference type="Gene3D" id="1.20.5.170">
    <property type="match status" value="1"/>
</dbReference>
<dbReference type="Gene3D" id="2.60.210.10">
    <property type="entry name" value="Apoptosis, Tumor Necrosis Factor Receptor Associated Protein 2, Chain A"/>
    <property type="match status" value="1"/>
</dbReference>
<dbReference type="Gene3D" id="3.30.40.10">
    <property type="entry name" value="Zinc/RING finger domain, C3HC4 (zinc finger)"/>
    <property type="match status" value="3"/>
</dbReference>
<dbReference type="InterPro" id="IPR002083">
    <property type="entry name" value="MATH/TRAF_dom"/>
</dbReference>
<dbReference type="InterPro" id="IPR012227">
    <property type="entry name" value="TNF_rcpt-assoc_TRAF_met"/>
</dbReference>
<dbReference type="InterPro" id="IPR008974">
    <property type="entry name" value="TRAF-like"/>
</dbReference>
<dbReference type="InterPro" id="IPR049342">
    <property type="entry name" value="TRAF1-6_MATH_dom"/>
</dbReference>
<dbReference type="InterPro" id="IPR037305">
    <property type="entry name" value="TRAF2_MATH"/>
</dbReference>
<dbReference type="InterPro" id="IPR027133">
    <property type="entry name" value="TRAF2_RING-HC"/>
</dbReference>
<dbReference type="InterPro" id="IPR049441">
    <property type="entry name" value="TRAF2_Znf"/>
</dbReference>
<dbReference type="InterPro" id="IPR032070">
    <property type="entry name" value="TRAF_BIRC3-bd"/>
</dbReference>
<dbReference type="InterPro" id="IPR018957">
    <property type="entry name" value="Znf_C3HC4_RING-type"/>
</dbReference>
<dbReference type="InterPro" id="IPR001841">
    <property type="entry name" value="Znf_RING"/>
</dbReference>
<dbReference type="InterPro" id="IPR013083">
    <property type="entry name" value="Znf_RING/FYVE/PHD"/>
</dbReference>
<dbReference type="InterPro" id="IPR017907">
    <property type="entry name" value="Znf_RING_CS"/>
</dbReference>
<dbReference type="InterPro" id="IPR001293">
    <property type="entry name" value="Znf_TRAF"/>
</dbReference>
<dbReference type="PANTHER" id="PTHR10131">
    <property type="entry name" value="TNF RECEPTOR ASSOCIATED FACTOR"/>
    <property type="match status" value="1"/>
</dbReference>
<dbReference type="PANTHER" id="PTHR10131:SF21">
    <property type="entry name" value="TNF RECEPTOR-ASSOCIATED FACTOR 2"/>
    <property type="match status" value="1"/>
</dbReference>
<dbReference type="Pfam" id="PF21355">
    <property type="entry name" value="TRAF-mep_MATH"/>
    <property type="match status" value="1"/>
</dbReference>
<dbReference type="Pfam" id="PF21341">
    <property type="entry name" value="TRAF2_zf"/>
    <property type="match status" value="1"/>
</dbReference>
<dbReference type="Pfam" id="PF16673">
    <property type="entry name" value="TRAF_BIRC3_bd"/>
    <property type="match status" value="1"/>
</dbReference>
<dbReference type="Pfam" id="PF00097">
    <property type="entry name" value="zf-C3HC4"/>
    <property type="match status" value="1"/>
</dbReference>
<dbReference type="Pfam" id="PF02176">
    <property type="entry name" value="zf-TRAF"/>
    <property type="match status" value="1"/>
</dbReference>
<dbReference type="PIRSF" id="PIRSF015614">
    <property type="entry name" value="TRAF"/>
    <property type="match status" value="1"/>
</dbReference>
<dbReference type="SMART" id="SM00061">
    <property type="entry name" value="MATH"/>
    <property type="match status" value="1"/>
</dbReference>
<dbReference type="SMART" id="SM00184">
    <property type="entry name" value="RING"/>
    <property type="match status" value="1"/>
</dbReference>
<dbReference type="SUPFAM" id="SSF57850">
    <property type="entry name" value="RING/U-box"/>
    <property type="match status" value="1"/>
</dbReference>
<dbReference type="SUPFAM" id="SSF49599">
    <property type="entry name" value="TRAF domain-like"/>
    <property type="match status" value="2"/>
</dbReference>
<dbReference type="SUPFAM" id="SSF57953">
    <property type="entry name" value="Trimerization domain of TRAF"/>
    <property type="match status" value="1"/>
</dbReference>
<dbReference type="PROSITE" id="PS50144">
    <property type="entry name" value="MATH"/>
    <property type="match status" value="1"/>
</dbReference>
<dbReference type="PROSITE" id="PS00518">
    <property type="entry name" value="ZF_RING_1"/>
    <property type="match status" value="1"/>
</dbReference>
<dbReference type="PROSITE" id="PS50089">
    <property type="entry name" value="ZF_RING_2"/>
    <property type="match status" value="1"/>
</dbReference>
<dbReference type="PROSITE" id="PS50145">
    <property type="entry name" value="ZF_TRAF"/>
    <property type="match status" value="2"/>
</dbReference>
<organism>
    <name type="scientific">Mus musculus</name>
    <name type="common">Mouse</name>
    <dbReference type="NCBI Taxonomy" id="10090"/>
    <lineage>
        <taxon>Eukaryota</taxon>
        <taxon>Metazoa</taxon>
        <taxon>Chordata</taxon>
        <taxon>Craniata</taxon>
        <taxon>Vertebrata</taxon>
        <taxon>Euteleostomi</taxon>
        <taxon>Mammalia</taxon>
        <taxon>Eutheria</taxon>
        <taxon>Euarchontoglires</taxon>
        <taxon>Glires</taxon>
        <taxon>Rodentia</taxon>
        <taxon>Myomorpha</taxon>
        <taxon>Muroidea</taxon>
        <taxon>Muridae</taxon>
        <taxon>Murinae</taxon>
        <taxon>Mus</taxon>
        <taxon>Mus</taxon>
    </lineage>
</organism>
<evidence type="ECO:0000250" key="1"/>
<evidence type="ECO:0000250" key="2">
    <source>
        <dbReference type="UniProtKB" id="Q12933"/>
    </source>
</evidence>
<evidence type="ECO:0000255" key="3">
    <source>
        <dbReference type="PROSITE-ProRule" id="PRU00129"/>
    </source>
</evidence>
<evidence type="ECO:0000255" key="4">
    <source>
        <dbReference type="PROSITE-ProRule" id="PRU00175"/>
    </source>
</evidence>
<evidence type="ECO:0000255" key="5">
    <source>
        <dbReference type="PROSITE-ProRule" id="PRU00207"/>
    </source>
</evidence>
<evidence type="ECO:0000269" key="6">
    <source>
    </source>
</evidence>
<evidence type="ECO:0000269" key="7">
    <source>
    </source>
</evidence>
<evidence type="ECO:0000269" key="8">
    <source>
    </source>
</evidence>
<evidence type="ECO:0000269" key="9">
    <source>
    </source>
</evidence>
<evidence type="ECO:0000269" key="10">
    <source>
    </source>
</evidence>
<evidence type="ECO:0000269" key="11">
    <source>
    </source>
</evidence>
<evidence type="ECO:0000269" key="12">
    <source>
    </source>
</evidence>
<evidence type="ECO:0000269" key="13">
    <source>
    </source>
</evidence>
<evidence type="ECO:0000269" key="14">
    <source>
    </source>
</evidence>
<evidence type="ECO:0000269" key="15">
    <source>
    </source>
</evidence>
<evidence type="ECO:0000269" key="16">
    <source>
    </source>
</evidence>
<evidence type="ECO:0000269" key="17">
    <source>
    </source>
</evidence>
<evidence type="ECO:0000269" key="18">
    <source>
    </source>
</evidence>
<evidence type="ECO:0000269" key="19">
    <source>
    </source>
</evidence>
<evidence type="ECO:0000269" key="20">
    <source>
    </source>
</evidence>
<evidence type="ECO:0000269" key="21">
    <source>
    </source>
</evidence>
<evidence type="ECO:0000269" key="22">
    <source>
    </source>
</evidence>
<evidence type="ECO:0000269" key="23">
    <source>
    </source>
</evidence>
<evidence type="ECO:0000269" key="24">
    <source>
    </source>
</evidence>
<evidence type="ECO:0000269" key="25">
    <source>
    </source>
</evidence>
<evidence type="ECO:0000269" key="26">
    <source>
    </source>
</evidence>
<evidence type="ECO:0000269" key="27">
    <source>
    </source>
</evidence>
<evidence type="ECO:0000269" key="28">
    <source>
    </source>
</evidence>
<evidence type="ECO:0000269" key="29">
    <source>
    </source>
</evidence>
<evidence type="ECO:0000269" key="30">
    <source>
    </source>
</evidence>
<evidence type="ECO:0000269" key="31">
    <source>
    </source>
</evidence>
<evidence type="ECO:0000269" key="32">
    <source>
    </source>
</evidence>
<evidence type="ECO:0000269" key="33">
    <source>
    </source>
</evidence>
<evidence type="ECO:0000303" key="34">
    <source>
    </source>
</evidence>
<evidence type="ECO:0000305" key="35"/>
<feature type="initiator methionine" description="Removed" evidence="2">
    <location>
        <position position="1"/>
    </location>
</feature>
<feature type="chain" id="PRO_0000056400" description="TNF receptor-associated factor 2">
    <location>
        <begin position="2"/>
        <end position="501"/>
    </location>
</feature>
<feature type="domain" description="MATH" evidence="3">
    <location>
        <begin position="351"/>
        <end position="496"/>
    </location>
</feature>
<feature type="zinc finger region" description="RING-type" evidence="4">
    <location>
        <begin position="34"/>
        <end position="73"/>
    </location>
</feature>
<feature type="zinc finger region" description="TRAF-type 1" evidence="5">
    <location>
        <begin position="124"/>
        <end position="180"/>
    </location>
</feature>
<feature type="zinc finger region" description="TRAF-type 2" evidence="5">
    <location>
        <begin position="177"/>
        <end position="233"/>
    </location>
</feature>
<feature type="region of interest" description="Important for interaction with BIRC2 and BIRC3">
    <location>
        <begin position="283"/>
        <end position="293"/>
    </location>
</feature>
<feature type="coiled-coil region" evidence="1">
    <location>
        <begin position="298"/>
        <end position="348"/>
    </location>
</feature>
<feature type="modified residue" description="N-acetylalanine" evidence="2">
    <location>
        <position position="2"/>
    </location>
</feature>
<feature type="modified residue" description="Phosphoserine" evidence="2">
    <location>
        <position position="5"/>
    </location>
</feature>
<feature type="modified residue" description="Phosphothreonine" evidence="2">
    <location>
        <position position="7"/>
    </location>
</feature>
<feature type="modified residue" description="Phosphoserine" evidence="2">
    <location>
        <position position="11"/>
    </location>
</feature>
<feature type="modified residue" description="Phosphothreonine" evidence="2">
    <location>
        <position position="22"/>
    </location>
</feature>
<feature type="modified residue" description="Phosphothreonine; by PKC" evidence="18">
    <location>
        <position position="117"/>
    </location>
</feature>
<feature type="cross-link" description="Glycyl lysine isopeptide (Lys-Gly) (interchain with G-Cter in ubiquitin)" evidence="2">
    <location>
        <position position="31"/>
    </location>
</feature>
<feature type="cross-link" description="Glycyl lysine isopeptide (Lys-Gly) (interchain with G-Cter in ubiquitin)" evidence="25">
    <location>
        <position position="320"/>
    </location>
</feature>
<feature type="splice variant" id="VSP_007402" description="In isoform 2." evidence="34">
    <original>L</original>
    <variation>LRCASILS</variation>
    <location>
        <position position="62"/>
    </location>
</feature>
<feature type="mutagenesis site" description="Loss of autoubiquitination." evidence="10">
    <original>C</original>
    <variation>S</variation>
    <location>
        <position position="34"/>
    </location>
</feature>
<feature type="mutagenesis site" description="Reduces interaction with BIRC2." evidence="21">
    <original>E</original>
    <variation>A</variation>
    <location>
        <position position="283"/>
    </location>
</feature>
<feature type="mutagenesis site" description="Almost abolishes interaction with BIRC2; when associated with A-294." evidence="21">
    <original>E</original>
    <variation>A</variation>
    <location>
        <position position="292"/>
    </location>
</feature>
<feature type="mutagenesis site" description="Almost abolishes interaction with BIRC2; when associated with A-292." evidence="21">
    <original>E</original>
    <variation>A</variation>
    <location>
        <position position="294"/>
    </location>
</feature>
<feature type="mutagenesis site" description="Abolished ubiquitination by the SCF(FBXL2) complex." evidence="25">
    <original>K</original>
    <variation>R</variation>
    <location>
        <position position="320"/>
    </location>
</feature>
<feature type="mutagenesis site" description="Decreased interaction with FBXL2." evidence="25">
    <original>W</original>
    <variation>A</variation>
    <location>
        <position position="356"/>
    </location>
</feature>
<accession>P39429</accession>
<accession>A2AJA3</accession>
<accession>O54896</accession>
<protein>
    <recommendedName>
        <fullName>TNF receptor-associated factor 2</fullName>
        <ecNumber>2.3.2.27</ecNumber>
    </recommendedName>
    <alternativeName>
        <fullName>E3 ubiquitin-protein ligase TRAF2</fullName>
    </alternativeName>
    <alternativeName>
        <fullName evidence="35">RING-type E3 ubiquitin transferase TRAF2</fullName>
    </alternativeName>
</protein>
<proteinExistence type="evidence at protein level"/>